<name>Y061_OSHVF</name>
<sequence>MSRSATKILIWFFKHNKGELLDVFNAISAPLSLPSKRELKLLWIKNEKFVRLTTTLVMLLLPRRFRRDTKRNLSKFVRKLCYDQKYVYAMKSVNYIVRSMVIPFSTTEHHLLFKICSLIIDRMKPTMLFSKRPKVTPFKLLFSLRGDRVKTLNMPSFERHSFVHKFLTPNKRLSGGLQNAIITNLWERAENEEEMSLVVNPSNNYVKRLAYLEELRHNMTLLGLSDSMLLLQDMADYLTGGKMKYDLDDRRGQPCPMMDVDLLTAFMSMNAATRSKFFSKTLEVSYPECTCFTKCMGAIAQHPVLVKQFENEFCLNNFSTRICGECRLSHVIDNTTSGKPRKSLSACNPGMSSCSMDACTVTLILRYLIHERVDERHGNLIKYGHRFYITNSSAVTDTVYRGNNITCSSATGRTGGVCFGGSRTCYKLIQNLVKSSKQYGLPRPFADRNYWWSCHTCQGKYGTHVNPRNSNQYNRDRHGFFSEEIHRNTCVDTFYQNVLRKVRKDMVDKDKEEEDEVIEVAVKHCYPKICRWCKSAIMCRHTMDGLVNMLVTSPKSRVLLNKVVILSLLQKLIKIEWT</sequence>
<dbReference type="EMBL" id="AY509253">
    <property type="protein sequence ID" value="AAS00951.1"/>
    <property type="molecule type" value="Genomic_DNA"/>
</dbReference>
<dbReference type="RefSeq" id="YP_024604.1">
    <property type="nucleotide sequence ID" value="NC_005881.2"/>
</dbReference>
<dbReference type="KEGG" id="vg:2948162"/>
<dbReference type="Proteomes" id="UP000007021">
    <property type="component" value="Segment"/>
</dbReference>
<accession>Q6R7G4</accession>
<organism>
    <name type="scientific">Ostreid herpesvirus 1 (isolate France)</name>
    <name type="common">OsHV-1</name>
    <name type="synonym">Pacific oyster herpesvirus</name>
    <dbReference type="NCBI Taxonomy" id="654903"/>
    <lineage>
        <taxon>Viruses</taxon>
        <taxon>Duplodnaviria</taxon>
        <taxon>Heunggongvirae</taxon>
        <taxon>Peploviricota</taxon>
        <taxon>Herviviricetes</taxon>
        <taxon>Herpesvirales</taxon>
        <taxon>Malacoherpesviridae</taxon>
        <taxon>Ostreavirus</taxon>
        <taxon>Ostreavirus ostreidmalaco1</taxon>
        <taxon>Ostreid herpesvirus 1</taxon>
    </lineage>
</organism>
<protein>
    <recommendedName>
        <fullName>Uncharacterized protein ORF61</fullName>
    </recommendedName>
</protein>
<reference key="1">
    <citation type="journal article" date="2005" name="J. Gen. Virol.">
        <title>A novel class of herpesvirus with bivalve hosts.</title>
        <authorList>
            <person name="Davison A.J."/>
            <person name="Trus B.L."/>
            <person name="Cheng N."/>
            <person name="Steven A.C."/>
            <person name="Watson M.S."/>
            <person name="Cunningham C."/>
            <person name="Le Deuff R.M."/>
            <person name="Renault T."/>
        </authorList>
    </citation>
    <scope>NUCLEOTIDE SEQUENCE [LARGE SCALE GENOMIC DNA]</scope>
</reference>
<gene>
    <name type="ORF">ORF61</name>
</gene>
<feature type="chain" id="PRO_0000385087" description="Uncharacterized protein ORF61">
    <location>
        <begin position="1"/>
        <end position="578"/>
    </location>
</feature>
<proteinExistence type="predicted"/>
<keyword id="KW-1185">Reference proteome</keyword>
<organismHost>
    <name type="scientific">Magallana gigas</name>
    <name type="common">Pacific oyster</name>
    <name type="synonym">Crassostrea gigas</name>
    <dbReference type="NCBI Taxonomy" id="29159"/>
</organismHost>
<organismHost>
    <name type="scientific">Pecten maximus</name>
    <name type="common">King scallop</name>
    <name type="synonym">Pilgrim's clam</name>
    <dbReference type="NCBI Taxonomy" id="6579"/>
</organismHost>